<feature type="chain" id="PRO_1000137564" description="Protein GrpE">
    <location>
        <begin position="1"/>
        <end position="197"/>
    </location>
</feature>
<feature type="region of interest" description="Disordered" evidence="2">
    <location>
        <begin position="1"/>
        <end position="40"/>
    </location>
</feature>
<name>GRPE_ECODH</name>
<dbReference type="EMBL" id="CP000948">
    <property type="protein sequence ID" value="ACB03758.1"/>
    <property type="molecule type" value="Genomic_DNA"/>
</dbReference>
<dbReference type="RefSeq" id="WP_001393454.1">
    <property type="nucleotide sequence ID" value="NC_010473.1"/>
</dbReference>
<dbReference type="SMR" id="B1XBT4"/>
<dbReference type="KEGG" id="ecd:ECDH10B_2780"/>
<dbReference type="HOGENOM" id="CLU_057217_6_0_6"/>
<dbReference type="GO" id="GO:0005829">
    <property type="term" value="C:cytosol"/>
    <property type="evidence" value="ECO:0007669"/>
    <property type="project" value="TreeGrafter"/>
</dbReference>
<dbReference type="GO" id="GO:0000774">
    <property type="term" value="F:adenyl-nucleotide exchange factor activity"/>
    <property type="evidence" value="ECO:0007669"/>
    <property type="project" value="InterPro"/>
</dbReference>
<dbReference type="GO" id="GO:0042803">
    <property type="term" value="F:protein homodimerization activity"/>
    <property type="evidence" value="ECO:0007669"/>
    <property type="project" value="InterPro"/>
</dbReference>
<dbReference type="GO" id="GO:0051087">
    <property type="term" value="F:protein-folding chaperone binding"/>
    <property type="evidence" value="ECO:0007669"/>
    <property type="project" value="InterPro"/>
</dbReference>
<dbReference type="GO" id="GO:0051082">
    <property type="term" value="F:unfolded protein binding"/>
    <property type="evidence" value="ECO:0007669"/>
    <property type="project" value="TreeGrafter"/>
</dbReference>
<dbReference type="GO" id="GO:0006457">
    <property type="term" value="P:protein folding"/>
    <property type="evidence" value="ECO:0007669"/>
    <property type="project" value="InterPro"/>
</dbReference>
<dbReference type="CDD" id="cd00446">
    <property type="entry name" value="GrpE"/>
    <property type="match status" value="1"/>
</dbReference>
<dbReference type="FunFam" id="2.30.22.10:FF:000001">
    <property type="entry name" value="Protein GrpE"/>
    <property type="match status" value="1"/>
</dbReference>
<dbReference type="FunFam" id="3.90.20.20:FF:000001">
    <property type="entry name" value="Protein GrpE"/>
    <property type="match status" value="1"/>
</dbReference>
<dbReference type="Gene3D" id="3.90.20.20">
    <property type="match status" value="1"/>
</dbReference>
<dbReference type="Gene3D" id="2.30.22.10">
    <property type="entry name" value="Head domain of nucleotide exchange factor GrpE"/>
    <property type="match status" value="1"/>
</dbReference>
<dbReference type="HAMAP" id="MF_01151">
    <property type="entry name" value="GrpE"/>
    <property type="match status" value="1"/>
</dbReference>
<dbReference type="InterPro" id="IPR000740">
    <property type="entry name" value="GrpE"/>
</dbReference>
<dbReference type="InterPro" id="IPR013805">
    <property type="entry name" value="GrpE_coiled_coil"/>
</dbReference>
<dbReference type="InterPro" id="IPR009012">
    <property type="entry name" value="GrpE_head"/>
</dbReference>
<dbReference type="NCBIfam" id="NF007655">
    <property type="entry name" value="PRK10325.1"/>
    <property type="match status" value="1"/>
</dbReference>
<dbReference type="NCBIfam" id="NF010738">
    <property type="entry name" value="PRK14140.1"/>
    <property type="match status" value="1"/>
</dbReference>
<dbReference type="NCBIfam" id="NF010748">
    <property type="entry name" value="PRK14150.1"/>
    <property type="match status" value="1"/>
</dbReference>
<dbReference type="PANTHER" id="PTHR21237">
    <property type="entry name" value="GRPE PROTEIN"/>
    <property type="match status" value="1"/>
</dbReference>
<dbReference type="PANTHER" id="PTHR21237:SF23">
    <property type="entry name" value="GRPE PROTEIN HOMOLOG, MITOCHONDRIAL"/>
    <property type="match status" value="1"/>
</dbReference>
<dbReference type="Pfam" id="PF01025">
    <property type="entry name" value="GrpE"/>
    <property type="match status" value="1"/>
</dbReference>
<dbReference type="PRINTS" id="PR00773">
    <property type="entry name" value="GRPEPROTEIN"/>
</dbReference>
<dbReference type="SUPFAM" id="SSF58014">
    <property type="entry name" value="Coiled-coil domain of nucleotide exchange factor GrpE"/>
    <property type="match status" value="1"/>
</dbReference>
<dbReference type="SUPFAM" id="SSF51064">
    <property type="entry name" value="Head domain of nucleotide exchange factor GrpE"/>
    <property type="match status" value="1"/>
</dbReference>
<dbReference type="PROSITE" id="PS01071">
    <property type="entry name" value="GRPE"/>
    <property type="match status" value="1"/>
</dbReference>
<accession>B1XBT4</accession>
<protein>
    <recommendedName>
        <fullName evidence="1">Protein GrpE</fullName>
    </recommendedName>
    <alternativeName>
        <fullName evidence="1">HSP-70 cofactor</fullName>
    </alternativeName>
</protein>
<proteinExistence type="inferred from homology"/>
<keyword id="KW-0143">Chaperone</keyword>
<keyword id="KW-0963">Cytoplasm</keyword>
<keyword id="KW-0346">Stress response</keyword>
<sequence>MSSKEQKTPEGQAPEEIIMDQHEEIEAVEPEASAEQVDPRDEKVANLEAQLAEAQTRERDGILRVKAEMENLRRRTELDIEKAHKFALEKFINELLPVIDSLDRALEVADKANPDMSAMVEGIELTLKSMLDVVRKFGVEVIAETNVPLDPNVHQAIAMVESDDVAPGNVLGIMQKGYTLNGRTIRAAMVTVAKAKA</sequence>
<reference key="1">
    <citation type="journal article" date="2008" name="J. Bacteriol.">
        <title>The complete genome sequence of Escherichia coli DH10B: insights into the biology of a laboratory workhorse.</title>
        <authorList>
            <person name="Durfee T."/>
            <person name="Nelson R."/>
            <person name="Baldwin S."/>
            <person name="Plunkett G. III"/>
            <person name="Burland V."/>
            <person name="Mau B."/>
            <person name="Petrosino J.F."/>
            <person name="Qin X."/>
            <person name="Muzny D.M."/>
            <person name="Ayele M."/>
            <person name="Gibbs R.A."/>
            <person name="Csorgo B."/>
            <person name="Posfai G."/>
            <person name="Weinstock G.M."/>
            <person name="Blattner F.R."/>
        </authorList>
    </citation>
    <scope>NUCLEOTIDE SEQUENCE [LARGE SCALE GENOMIC DNA]</scope>
    <source>
        <strain>K12 / DH10B</strain>
    </source>
</reference>
<organism>
    <name type="scientific">Escherichia coli (strain K12 / DH10B)</name>
    <dbReference type="NCBI Taxonomy" id="316385"/>
    <lineage>
        <taxon>Bacteria</taxon>
        <taxon>Pseudomonadati</taxon>
        <taxon>Pseudomonadota</taxon>
        <taxon>Gammaproteobacteria</taxon>
        <taxon>Enterobacterales</taxon>
        <taxon>Enterobacteriaceae</taxon>
        <taxon>Escherichia</taxon>
    </lineage>
</organism>
<comment type="function">
    <text evidence="1">Participates actively in the response to hyperosmotic and heat shock by preventing the aggregation of stress-denatured proteins, in association with DnaK and GrpE. It is the nucleotide exchange factor for DnaK and may function as a thermosensor. Unfolded proteins bind initially to DnaJ; upon interaction with the DnaJ-bound protein, DnaK hydrolyzes its bound ATP, resulting in the formation of a stable complex. GrpE releases ADP from DnaK; ATP binding to DnaK triggers the release of the substrate protein, thus completing the reaction cycle. Several rounds of ATP-dependent interactions between DnaJ, DnaK and GrpE are required for fully efficient folding.</text>
</comment>
<comment type="subunit">
    <text evidence="1">Homodimer.</text>
</comment>
<comment type="subcellular location">
    <subcellularLocation>
        <location evidence="1">Cytoplasm</location>
    </subcellularLocation>
</comment>
<comment type="similarity">
    <text evidence="1">Belongs to the GrpE family.</text>
</comment>
<gene>
    <name evidence="1" type="primary">grpE</name>
    <name type="ordered locus">ECDH10B_2780</name>
</gene>
<evidence type="ECO:0000255" key="1">
    <source>
        <dbReference type="HAMAP-Rule" id="MF_01151"/>
    </source>
</evidence>
<evidence type="ECO:0000256" key="2">
    <source>
        <dbReference type="SAM" id="MobiDB-lite"/>
    </source>
</evidence>